<feature type="chain" id="PRO_0000112576" description="Acetylglutamate kinase">
    <location>
        <begin position="1"/>
        <end position="258"/>
    </location>
</feature>
<feature type="binding site" evidence="1">
    <location>
        <begin position="41"/>
        <end position="42"/>
    </location>
    <ligand>
        <name>substrate</name>
    </ligand>
</feature>
<feature type="binding site" evidence="1">
    <location>
        <position position="63"/>
    </location>
    <ligand>
        <name>substrate</name>
    </ligand>
</feature>
<feature type="binding site" evidence="1">
    <location>
        <position position="156"/>
    </location>
    <ligand>
        <name>substrate</name>
    </ligand>
</feature>
<feature type="site" description="Transition state stabilizer" evidence="1">
    <location>
        <position position="8"/>
    </location>
</feature>
<feature type="site" description="Transition state stabilizer" evidence="1">
    <location>
        <position position="215"/>
    </location>
</feature>
<organism>
    <name type="scientific">Bacillus amyloliquefaciens</name>
    <name type="common">Bacillus velezensis</name>
    <dbReference type="NCBI Taxonomy" id="1390"/>
    <lineage>
        <taxon>Bacteria</taxon>
        <taxon>Bacillati</taxon>
        <taxon>Bacillota</taxon>
        <taxon>Bacilli</taxon>
        <taxon>Bacillales</taxon>
        <taxon>Bacillaceae</taxon>
        <taxon>Bacillus</taxon>
        <taxon>Bacillus amyloliquefaciens group</taxon>
    </lineage>
</organism>
<gene>
    <name evidence="1" type="primary">argB</name>
</gene>
<keyword id="KW-0028">Amino-acid biosynthesis</keyword>
<keyword id="KW-0055">Arginine biosynthesis</keyword>
<keyword id="KW-0067">ATP-binding</keyword>
<keyword id="KW-0963">Cytoplasm</keyword>
<keyword id="KW-0418">Kinase</keyword>
<keyword id="KW-0547">Nucleotide-binding</keyword>
<keyword id="KW-0808">Transferase</keyword>
<proteinExistence type="inferred from homology"/>
<dbReference type="EC" id="2.7.2.8" evidence="1"/>
<dbReference type="EMBL" id="AF001832">
    <property type="protein sequence ID" value="AAD00907.1"/>
    <property type="molecule type" value="Genomic_DNA"/>
</dbReference>
<dbReference type="SMR" id="P68728"/>
<dbReference type="STRING" id="692420.BAMF_1194"/>
<dbReference type="UniPathway" id="UPA00068">
    <property type="reaction ID" value="UER00107"/>
</dbReference>
<dbReference type="GO" id="GO:0005737">
    <property type="term" value="C:cytoplasm"/>
    <property type="evidence" value="ECO:0007669"/>
    <property type="project" value="UniProtKB-SubCell"/>
</dbReference>
<dbReference type="GO" id="GO:0003991">
    <property type="term" value="F:acetylglutamate kinase activity"/>
    <property type="evidence" value="ECO:0007669"/>
    <property type="project" value="UniProtKB-UniRule"/>
</dbReference>
<dbReference type="GO" id="GO:0005524">
    <property type="term" value="F:ATP binding"/>
    <property type="evidence" value="ECO:0007669"/>
    <property type="project" value="UniProtKB-UniRule"/>
</dbReference>
<dbReference type="GO" id="GO:0042450">
    <property type="term" value="P:arginine biosynthetic process via ornithine"/>
    <property type="evidence" value="ECO:0007669"/>
    <property type="project" value="UniProtKB-UniRule"/>
</dbReference>
<dbReference type="GO" id="GO:0006526">
    <property type="term" value="P:L-arginine biosynthetic process"/>
    <property type="evidence" value="ECO:0007669"/>
    <property type="project" value="UniProtKB-UniPathway"/>
</dbReference>
<dbReference type="CDD" id="cd04238">
    <property type="entry name" value="AAK_NAGK-like"/>
    <property type="match status" value="1"/>
</dbReference>
<dbReference type="FunFam" id="3.40.1160.10:FF:000004">
    <property type="entry name" value="Acetylglutamate kinase"/>
    <property type="match status" value="1"/>
</dbReference>
<dbReference type="Gene3D" id="3.40.1160.10">
    <property type="entry name" value="Acetylglutamate kinase-like"/>
    <property type="match status" value="1"/>
</dbReference>
<dbReference type="HAMAP" id="MF_00082">
    <property type="entry name" value="ArgB"/>
    <property type="match status" value="1"/>
</dbReference>
<dbReference type="InterPro" id="IPR036393">
    <property type="entry name" value="AceGlu_kinase-like_sf"/>
</dbReference>
<dbReference type="InterPro" id="IPR004662">
    <property type="entry name" value="AcgluKinase_fam"/>
</dbReference>
<dbReference type="InterPro" id="IPR037528">
    <property type="entry name" value="ArgB"/>
</dbReference>
<dbReference type="InterPro" id="IPR001048">
    <property type="entry name" value="Asp/Glu/Uridylate_kinase"/>
</dbReference>
<dbReference type="InterPro" id="IPR001057">
    <property type="entry name" value="Glu/AcGlu_kinase"/>
</dbReference>
<dbReference type="NCBIfam" id="TIGR00761">
    <property type="entry name" value="argB"/>
    <property type="match status" value="1"/>
</dbReference>
<dbReference type="PANTHER" id="PTHR23342">
    <property type="entry name" value="N-ACETYLGLUTAMATE SYNTHASE"/>
    <property type="match status" value="1"/>
</dbReference>
<dbReference type="PANTHER" id="PTHR23342:SF0">
    <property type="entry name" value="N-ACETYLGLUTAMATE SYNTHASE, MITOCHONDRIAL"/>
    <property type="match status" value="1"/>
</dbReference>
<dbReference type="Pfam" id="PF00696">
    <property type="entry name" value="AA_kinase"/>
    <property type="match status" value="1"/>
</dbReference>
<dbReference type="PIRSF" id="PIRSF000728">
    <property type="entry name" value="NAGK"/>
    <property type="match status" value="1"/>
</dbReference>
<dbReference type="PRINTS" id="PR00474">
    <property type="entry name" value="GLU5KINASE"/>
</dbReference>
<dbReference type="SUPFAM" id="SSF53633">
    <property type="entry name" value="Carbamate kinase-like"/>
    <property type="match status" value="1"/>
</dbReference>
<accession>P68728</accession>
<accession>P36840</accession>
<sequence>MKKTIVFKCGGSVIRELSEEFYQNLKELRASGWKLAIVHGGGPEITNMLKRLNIKTEFSGGQRKTTKPVLEVAEMVLSGSVNKFFVAELAKHGLRAAGISGKDGGLLEADYLDPETYGEVGEIKKVDASMVNALMENGIIPVIAPLSMTSDCKTLNVNADLAASAVAGALEADKLMFVTDVDGIMKEKQRLDVLTPKEIQMLIKQEVITGGMIPKVNSALSALSDQVSEVMIVNGKGSFFAEQTFQGTKIVKAKEAVS</sequence>
<evidence type="ECO:0000255" key="1">
    <source>
        <dbReference type="HAMAP-Rule" id="MF_00082"/>
    </source>
</evidence>
<comment type="function">
    <text evidence="1">Catalyzes the ATP-dependent phosphorylation of N-acetyl-L-glutamate.</text>
</comment>
<comment type="catalytic activity">
    <reaction evidence="1">
        <text>N-acetyl-L-glutamate + ATP = N-acetyl-L-glutamyl 5-phosphate + ADP</text>
        <dbReference type="Rhea" id="RHEA:14629"/>
        <dbReference type="ChEBI" id="CHEBI:30616"/>
        <dbReference type="ChEBI" id="CHEBI:44337"/>
        <dbReference type="ChEBI" id="CHEBI:57936"/>
        <dbReference type="ChEBI" id="CHEBI:456216"/>
        <dbReference type="EC" id="2.7.2.8"/>
    </reaction>
</comment>
<comment type="pathway">
    <text evidence="1">Amino-acid biosynthesis; L-arginine biosynthesis; N(2)-acetyl-L-ornithine from L-glutamate: step 2/4.</text>
</comment>
<comment type="subcellular location">
    <subcellularLocation>
        <location evidence="1">Cytoplasm</location>
    </subcellularLocation>
</comment>
<comment type="similarity">
    <text evidence="1">Belongs to the acetylglutamate kinase family. ArgB subfamily.</text>
</comment>
<reference key="1">
    <citation type="submission" date="1997-04" db="EMBL/GenBank/DDBJ databases">
        <authorList>
            <person name="Kim H.K."/>
            <person name="Min K.H."/>
            <person name="Yamane K."/>
        </authorList>
    </citation>
    <scope>NUCLEOTIDE SEQUENCE [GENOMIC DNA]</scope>
</reference>
<protein>
    <recommendedName>
        <fullName evidence="1">Acetylglutamate kinase</fullName>
        <ecNumber evidence="1">2.7.2.8</ecNumber>
    </recommendedName>
    <alternativeName>
        <fullName evidence="1">N-acetyl-L-glutamate 5-phosphotransferase</fullName>
    </alternativeName>
    <alternativeName>
        <fullName evidence="1">NAG kinase</fullName>
        <shortName evidence="1">NAGK</shortName>
    </alternativeName>
</protein>
<name>ARGB_BACAM</name>